<gene>
    <name evidence="1" type="primary">Ccdc194</name>
</gene>
<dbReference type="EMBL" id="AC127416">
    <property type="status" value="NOT_ANNOTATED_CDS"/>
    <property type="molecule type" value="Genomic_DNA"/>
</dbReference>
<dbReference type="CCDS" id="CCDS90414.1"/>
<dbReference type="RefSeq" id="NP_001357778.1">
    <property type="nucleotide sequence ID" value="NM_001370849.1"/>
</dbReference>
<dbReference type="RefSeq" id="XP_003945491.1">
    <property type="nucleotide sequence ID" value="XM_003945442.3"/>
</dbReference>
<dbReference type="SMR" id="A0A140LIT1"/>
<dbReference type="ProteomicsDB" id="281491"/>
<dbReference type="Ensembl" id="ENSMUST00000207913.2">
    <property type="protein sequence ID" value="ENSMUSP00000146946.2"/>
    <property type="gene ID" value="ENSMUSG00000108900.2"/>
</dbReference>
<dbReference type="GeneID" id="619297"/>
<dbReference type="AGR" id="MGI:3588239"/>
<dbReference type="MGI" id="MGI:3588239">
    <property type="gene designation" value="Ccdc194"/>
</dbReference>
<dbReference type="VEuPathDB" id="HostDB:ENSMUSG00000108900"/>
<dbReference type="GeneTree" id="ENSGT00850000133633"/>
<dbReference type="InParanoid" id="A0A140LIT1"/>
<dbReference type="OMA" id="TQMGVEN"/>
<dbReference type="OrthoDB" id="9751369at2759"/>
<dbReference type="PRO" id="PR:A0A140LIT1"/>
<dbReference type="Proteomes" id="UP000000589">
    <property type="component" value="Chromosome 8"/>
</dbReference>
<dbReference type="RNAct" id="A0A140LIT1">
    <property type="molecule type" value="protein"/>
</dbReference>
<dbReference type="Bgee" id="ENSMUSG00000108900">
    <property type="expression patterns" value="Expressed in epiblast (generic) and 11 other cell types or tissues"/>
</dbReference>
<proteinExistence type="inferred from homology"/>
<sequence>MAEPGPEPGRAWRLLALCGAAVFLAAAAAGGALVAWNLAASTARSPRCPEPEQMNATVRPPDSAPEVEELRRRLAEAEQAQENLVWQLQRAEGDKRELEAALKACKDSQSRLQTQLKALKIEMDQAKVRGTQMGLENGMLTEALVRWEATATESKQQLEEALQRAGAAEAAGEACVSREVALREHIYALEAELGTLRKESRLRPRSGSRTKPSISHRPKSGSTKGCRRPPRDPQ</sequence>
<evidence type="ECO:0000250" key="1">
    <source>
        <dbReference type="UniProtKB" id="A0A1B0GVG4"/>
    </source>
</evidence>
<evidence type="ECO:0000255" key="2"/>
<evidence type="ECO:0000256" key="3">
    <source>
        <dbReference type="SAM" id="MobiDB-lite"/>
    </source>
</evidence>
<evidence type="ECO:0000305" key="4"/>
<name>CC194_MOUSE</name>
<reference key="1">
    <citation type="journal article" date="2009" name="PLoS Biol.">
        <title>Lineage-specific biology revealed by a finished genome assembly of the mouse.</title>
        <authorList>
            <person name="Church D.M."/>
            <person name="Goodstadt L."/>
            <person name="Hillier L.W."/>
            <person name="Zody M.C."/>
            <person name="Goldstein S."/>
            <person name="She X."/>
            <person name="Bult C.J."/>
            <person name="Agarwala R."/>
            <person name="Cherry J.L."/>
            <person name="DiCuccio M."/>
            <person name="Hlavina W."/>
            <person name="Kapustin Y."/>
            <person name="Meric P."/>
            <person name="Maglott D."/>
            <person name="Birtle Z."/>
            <person name="Marques A.C."/>
            <person name="Graves T."/>
            <person name="Zhou S."/>
            <person name="Teague B."/>
            <person name="Potamousis K."/>
            <person name="Churas C."/>
            <person name="Place M."/>
            <person name="Herschleb J."/>
            <person name="Runnheim R."/>
            <person name="Forrest D."/>
            <person name="Amos-Landgraf J."/>
            <person name="Schwartz D.C."/>
            <person name="Cheng Z."/>
            <person name="Lindblad-Toh K."/>
            <person name="Eichler E.E."/>
            <person name="Ponting C.P."/>
        </authorList>
    </citation>
    <scope>NUCLEOTIDE SEQUENCE [LARGE SCALE GENOMIC DNA]</scope>
    <source>
        <strain>C57BL/6J</strain>
    </source>
</reference>
<keyword id="KW-0175">Coiled coil</keyword>
<keyword id="KW-1185">Reference proteome</keyword>
<keyword id="KW-0732">Signal</keyword>
<protein>
    <recommendedName>
        <fullName evidence="4">Coiled-coil domain-containing protein 194</fullName>
    </recommendedName>
</protein>
<organism>
    <name type="scientific">Mus musculus</name>
    <name type="common">Mouse</name>
    <dbReference type="NCBI Taxonomy" id="10090"/>
    <lineage>
        <taxon>Eukaryota</taxon>
        <taxon>Metazoa</taxon>
        <taxon>Chordata</taxon>
        <taxon>Craniata</taxon>
        <taxon>Vertebrata</taxon>
        <taxon>Euteleostomi</taxon>
        <taxon>Mammalia</taxon>
        <taxon>Eutheria</taxon>
        <taxon>Euarchontoglires</taxon>
        <taxon>Glires</taxon>
        <taxon>Rodentia</taxon>
        <taxon>Myomorpha</taxon>
        <taxon>Muroidea</taxon>
        <taxon>Muridae</taxon>
        <taxon>Murinae</taxon>
        <taxon>Mus</taxon>
        <taxon>Mus</taxon>
    </lineage>
</organism>
<feature type="signal peptide" evidence="2">
    <location>
        <begin position="1"/>
        <end position="43"/>
    </location>
</feature>
<feature type="chain" id="PRO_0000441408" description="Coiled-coil domain-containing protein 194" evidence="2">
    <location>
        <begin position="44"/>
        <end position="234"/>
    </location>
</feature>
<feature type="region of interest" description="Disordered" evidence="3">
    <location>
        <begin position="44"/>
        <end position="63"/>
    </location>
</feature>
<feature type="region of interest" description="Disordered" evidence="3">
    <location>
        <begin position="194"/>
        <end position="234"/>
    </location>
</feature>
<feature type="coiled-coil region" evidence="2">
    <location>
        <begin position="67"/>
        <end position="171"/>
    </location>
</feature>
<feature type="compositionally biased region" description="Basic residues" evidence="3">
    <location>
        <begin position="203"/>
        <end position="219"/>
    </location>
</feature>
<accession>A0A140LIT1</accession>